<sequence>MTRILATGTFDLLHPGHIYFLTQARALGDELFVIVARDSNVTHKPKPIVSEEQRLEMVNALGIVDKALLGSEKDMFEPLKHIRPDIIALGYDQRFNAENLEEELAKRGLPANVVRIPLSKECPLCSTGAIIKEVLKRYG</sequence>
<name>RIBL_METBF</name>
<dbReference type="EC" id="2.7.7.2" evidence="1"/>
<dbReference type="EMBL" id="CP000099">
    <property type="protein sequence ID" value="AAZ71015.1"/>
    <property type="molecule type" value="Genomic_DNA"/>
</dbReference>
<dbReference type="SMR" id="Q46AS7"/>
<dbReference type="STRING" id="269797.Mbar_A2084"/>
<dbReference type="PaxDb" id="269797-Mbar_A2084"/>
<dbReference type="KEGG" id="mba:Mbar_A2084"/>
<dbReference type="eggNOG" id="arCOG01222">
    <property type="taxonomic scope" value="Archaea"/>
</dbReference>
<dbReference type="HOGENOM" id="CLU_034585_2_1_2"/>
<dbReference type="UniPathway" id="UPA00277">
    <property type="reaction ID" value="UER00407"/>
</dbReference>
<dbReference type="GO" id="GO:0005524">
    <property type="term" value="F:ATP binding"/>
    <property type="evidence" value="ECO:0007669"/>
    <property type="project" value="UniProtKB-UniRule"/>
</dbReference>
<dbReference type="GO" id="GO:0003919">
    <property type="term" value="F:FMN adenylyltransferase activity"/>
    <property type="evidence" value="ECO:0007669"/>
    <property type="project" value="UniProtKB-UniRule"/>
</dbReference>
<dbReference type="GO" id="GO:0006747">
    <property type="term" value="P:FAD biosynthetic process"/>
    <property type="evidence" value="ECO:0007669"/>
    <property type="project" value="UniProtKB-UniRule"/>
</dbReference>
<dbReference type="GO" id="GO:0046444">
    <property type="term" value="P:FMN metabolic process"/>
    <property type="evidence" value="ECO:0007669"/>
    <property type="project" value="UniProtKB-UniRule"/>
</dbReference>
<dbReference type="CDD" id="cd02170">
    <property type="entry name" value="cytidylyltransferase"/>
    <property type="match status" value="1"/>
</dbReference>
<dbReference type="Gene3D" id="3.40.50.620">
    <property type="entry name" value="HUPs"/>
    <property type="match status" value="1"/>
</dbReference>
<dbReference type="HAMAP" id="MF_02115">
    <property type="entry name" value="FAD_synth_arch"/>
    <property type="match status" value="1"/>
</dbReference>
<dbReference type="InterPro" id="IPR050385">
    <property type="entry name" value="Archaeal_FAD_synthase"/>
</dbReference>
<dbReference type="InterPro" id="IPR004821">
    <property type="entry name" value="Cyt_trans-like"/>
</dbReference>
<dbReference type="InterPro" id="IPR024902">
    <property type="entry name" value="FAD_synth_RibL"/>
</dbReference>
<dbReference type="InterPro" id="IPR014729">
    <property type="entry name" value="Rossmann-like_a/b/a_fold"/>
</dbReference>
<dbReference type="NCBIfam" id="TIGR00125">
    <property type="entry name" value="cyt_tran_rel"/>
    <property type="match status" value="1"/>
</dbReference>
<dbReference type="PANTHER" id="PTHR43793">
    <property type="entry name" value="FAD SYNTHASE"/>
    <property type="match status" value="1"/>
</dbReference>
<dbReference type="PANTHER" id="PTHR43793:SF1">
    <property type="entry name" value="FAD SYNTHASE"/>
    <property type="match status" value="1"/>
</dbReference>
<dbReference type="Pfam" id="PF01467">
    <property type="entry name" value="CTP_transf_like"/>
    <property type="match status" value="1"/>
</dbReference>
<dbReference type="SUPFAM" id="SSF52374">
    <property type="entry name" value="Nucleotidylyl transferase"/>
    <property type="match status" value="1"/>
</dbReference>
<evidence type="ECO:0000255" key="1">
    <source>
        <dbReference type="HAMAP-Rule" id="MF_02115"/>
    </source>
</evidence>
<reference key="1">
    <citation type="journal article" date="2006" name="J. Bacteriol.">
        <title>The Methanosarcina barkeri genome: comparative analysis with Methanosarcina acetivorans and Methanosarcina mazei reveals extensive rearrangement within methanosarcinal genomes.</title>
        <authorList>
            <person name="Maeder D.L."/>
            <person name="Anderson I."/>
            <person name="Brettin T.S."/>
            <person name="Bruce D.C."/>
            <person name="Gilna P."/>
            <person name="Han C.S."/>
            <person name="Lapidus A."/>
            <person name="Metcalf W.W."/>
            <person name="Saunders E."/>
            <person name="Tapia R."/>
            <person name="Sowers K.R."/>
        </authorList>
    </citation>
    <scope>NUCLEOTIDE SEQUENCE [LARGE SCALE GENOMIC DNA]</scope>
    <source>
        <strain>Fusaro / DSM 804</strain>
    </source>
</reference>
<feature type="chain" id="PRO_0000406269" description="FAD synthase">
    <location>
        <begin position="1"/>
        <end position="139"/>
    </location>
</feature>
<feature type="binding site" evidence="1">
    <location>
        <begin position="9"/>
        <end position="10"/>
    </location>
    <ligand>
        <name>ATP</name>
        <dbReference type="ChEBI" id="CHEBI:30616"/>
    </ligand>
</feature>
<feature type="binding site" evidence="1">
    <location>
        <begin position="14"/>
        <end position="17"/>
    </location>
    <ligand>
        <name>ATP</name>
        <dbReference type="ChEBI" id="CHEBI:30616"/>
    </ligand>
</feature>
<feature type="binding site" evidence="1">
    <location>
        <position position="92"/>
    </location>
    <ligand>
        <name>ATP</name>
        <dbReference type="ChEBI" id="CHEBI:30616"/>
    </ligand>
</feature>
<organism>
    <name type="scientific">Methanosarcina barkeri (strain Fusaro / DSM 804)</name>
    <dbReference type="NCBI Taxonomy" id="269797"/>
    <lineage>
        <taxon>Archaea</taxon>
        <taxon>Methanobacteriati</taxon>
        <taxon>Methanobacteriota</taxon>
        <taxon>Stenosarchaea group</taxon>
        <taxon>Methanomicrobia</taxon>
        <taxon>Methanosarcinales</taxon>
        <taxon>Methanosarcinaceae</taxon>
        <taxon>Methanosarcina</taxon>
    </lineage>
</organism>
<protein>
    <recommendedName>
        <fullName evidence="1">FAD synthase</fullName>
        <ecNumber evidence="1">2.7.7.2</ecNumber>
    </recommendedName>
    <alternativeName>
        <fullName evidence="1">FMN adenylyltransferase</fullName>
    </alternativeName>
    <alternativeName>
        <fullName evidence="1">Flavin adenine dinucleotide synthase</fullName>
    </alternativeName>
</protein>
<accession>Q46AS7</accession>
<proteinExistence type="inferred from homology"/>
<comment type="function">
    <text evidence="1">Catalyzes the transfer of the AMP portion of ATP to flavin mononucleotide (FMN) to produce flavin adenine dinucleotide (FAD) coenzyme.</text>
</comment>
<comment type="catalytic activity">
    <reaction evidence="1">
        <text>FMN + ATP + H(+) = FAD + diphosphate</text>
        <dbReference type="Rhea" id="RHEA:17237"/>
        <dbReference type="ChEBI" id="CHEBI:15378"/>
        <dbReference type="ChEBI" id="CHEBI:30616"/>
        <dbReference type="ChEBI" id="CHEBI:33019"/>
        <dbReference type="ChEBI" id="CHEBI:57692"/>
        <dbReference type="ChEBI" id="CHEBI:58210"/>
        <dbReference type="EC" id="2.7.7.2"/>
    </reaction>
</comment>
<comment type="cofactor">
    <cofactor evidence="1">
        <name>a divalent metal cation</name>
        <dbReference type="ChEBI" id="CHEBI:60240"/>
    </cofactor>
</comment>
<comment type="pathway">
    <text evidence="1">Cofactor biosynthesis; FAD biosynthesis; FAD from FMN: step 1/1.</text>
</comment>
<comment type="subunit">
    <text evidence="1">Homodimer.</text>
</comment>
<comment type="similarity">
    <text evidence="1">Belongs to the archaeal FAD synthase family.</text>
</comment>
<gene>
    <name evidence="1" type="primary">ribL</name>
    <name type="ordered locus">Mbar_A2084</name>
</gene>
<keyword id="KW-0067">ATP-binding</keyword>
<keyword id="KW-0274">FAD</keyword>
<keyword id="KW-0285">Flavoprotein</keyword>
<keyword id="KW-0288">FMN</keyword>
<keyword id="KW-0547">Nucleotide-binding</keyword>
<keyword id="KW-0548">Nucleotidyltransferase</keyword>
<keyword id="KW-0808">Transferase</keyword>